<accession>Q13643</accession>
<accession>D3DPT6</accession>
<accession>Q6I9T0</accession>
<accession>Q9BVA2</accession>
<dbReference type="EMBL" id="U60116">
    <property type="protein sequence ID" value="AAC04466.2"/>
    <property type="molecule type" value="mRNA"/>
</dbReference>
<dbReference type="EMBL" id="AK290641">
    <property type="protein sequence ID" value="BAF83330.1"/>
    <property type="molecule type" value="mRNA"/>
</dbReference>
<dbReference type="EMBL" id="BT007052">
    <property type="protein sequence ID" value="AAP35701.1"/>
    <property type="molecule type" value="mRNA"/>
</dbReference>
<dbReference type="EMBL" id="CR457425">
    <property type="protein sequence ID" value="CAG33706.1"/>
    <property type="molecule type" value="mRNA"/>
</dbReference>
<dbReference type="EMBL" id="AL603790">
    <property type="status" value="NOT_ANNOTATED_CDS"/>
    <property type="molecule type" value="Genomic_DNA"/>
</dbReference>
<dbReference type="EMBL" id="CH471059">
    <property type="protein sequence ID" value="EAX07301.1"/>
    <property type="molecule type" value="Genomic_DNA"/>
</dbReference>
<dbReference type="EMBL" id="CH471059">
    <property type="protein sequence ID" value="EAX07302.1"/>
    <property type="molecule type" value="Genomic_DNA"/>
</dbReference>
<dbReference type="EMBL" id="BC001351">
    <property type="protein sequence ID" value="AAH01351.1"/>
    <property type="molecule type" value="mRNA"/>
</dbReference>
<dbReference type="EMBL" id="BC011697">
    <property type="protein sequence ID" value="AAH11697.1"/>
    <property type="molecule type" value="mRNA"/>
</dbReference>
<dbReference type="CCDS" id="CCDS30678.1"/>
<dbReference type="PIR" id="T09504">
    <property type="entry name" value="T09504"/>
</dbReference>
<dbReference type="RefSeq" id="NP_001230807.1">
    <property type="nucleotide sequence ID" value="NM_001243878.1"/>
</dbReference>
<dbReference type="RefSeq" id="NP_004459.2">
    <property type="nucleotide sequence ID" value="NM_004468.5"/>
</dbReference>
<dbReference type="PDB" id="1WYH">
    <property type="method" value="NMR"/>
    <property type="chains" value="A=101-159"/>
</dbReference>
<dbReference type="PDB" id="2CUQ">
    <property type="method" value="NMR"/>
    <property type="chains" value="A=152-218"/>
</dbReference>
<dbReference type="PDB" id="2EHE">
    <property type="method" value="NMR"/>
    <property type="chains" value="A=30-99"/>
</dbReference>
<dbReference type="PDBsum" id="1WYH"/>
<dbReference type="PDBsum" id="2CUQ"/>
<dbReference type="PDBsum" id="2EHE"/>
<dbReference type="SMR" id="Q13643"/>
<dbReference type="BioGRID" id="108566">
    <property type="interactions" value="283"/>
</dbReference>
<dbReference type="CORUM" id="Q13643"/>
<dbReference type="DIP" id="DIP-42030N"/>
<dbReference type="FunCoup" id="Q13643">
    <property type="interactions" value="252"/>
</dbReference>
<dbReference type="IntAct" id="Q13643">
    <property type="interactions" value="211"/>
</dbReference>
<dbReference type="MINT" id="Q13643"/>
<dbReference type="STRING" id="9606.ENSP00000362107"/>
<dbReference type="GlyGen" id="Q13643">
    <property type="glycosylation" value="1 site, 1 O-linked glycan (1 site)"/>
</dbReference>
<dbReference type="iPTMnet" id="Q13643"/>
<dbReference type="PhosphoSitePlus" id="Q13643"/>
<dbReference type="BioMuta" id="FHL3"/>
<dbReference type="DMDM" id="209572768"/>
<dbReference type="jPOST" id="Q13643"/>
<dbReference type="MassIVE" id="Q13643"/>
<dbReference type="PaxDb" id="9606-ENSP00000362107"/>
<dbReference type="PeptideAtlas" id="Q13643"/>
<dbReference type="ProteomicsDB" id="59647"/>
<dbReference type="Pumba" id="Q13643"/>
<dbReference type="Antibodypedia" id="31823">
    <property type="antibodies" value="171 antibodies from 31 providers"/>
</dbReference>
<dbReference type="DNASU" id="2275"/>
<dbReference type="Ensembl" id="ENST00000373016.4">
    <property type="protein sequence ID" value="ENSP00000362107.3"/>
    <property type="gene ID" value="ENSG00000183386.11"/>
</dbReference>
<dbReference type="Ensembl" id="ENST00000850578.1">
    <property type="protein sequence ID" value="ENSP00000520866.1"/>
    <property type="gene ID" value="ENSG00000183386.11"/>
</dbReference>
<dbReference type="GeneID" id="2275"/>
<dbReference type="KEGG" id="hsa:2275"/>
<dbReference type="MANE-Select" id="ENST00000373016.4">
    <property type="protein sequence ID" value="ENSP00000362107.3"/>
    <property type="RefSeq nucleotide sequence ID" value="NM_004468.5"/>
    <property type="RefSeq protein sequence ID" value="NP_004459.2"/>
</dbReference>
<dbReference type="UCSC" id="uc001cck.4">
    <property type="organism name" value="human"/>
</dbReference>
<dbReference type="AGR" id="HGNC:3704"/>
<dbReference type="CTD" id="2275"/>
<dbReference type="DisGeNET" id="2275"/>
<dbReference type="GeneCards" id="FHL3"/>
<dbReference type="HGNC" id="HGNC:3704">
    <property type="gene designation" value="FHL3"/>
</dbReference>
<dbReference type="HPA" id="ENSG00000183386">
    <property type="expression patterns" value="Group enriched (skeletal muscle, tongue)"/>
</dbReference>
<dbReference type="MIM" id="602790">
    <property type="type" value="gene"/>
</dbReference>
<dbReference type="neXtProt" id="NX_Q13643"/>
<dbReference type="OpenTargets" id="ENSG00000183386"/>
<dbReference type="PharmGKB" id="PA28142"/>
<dbReference type="VEuPathDB" id="HostDB:ENSG00000183386"/>
<dbReference type="eggNOG" id="KOG1704">
    <property type="taxonomic scope" value="Eukaryota"/>
</dbReference>
<dbReference type="GeneTree" id="ENSGT00950000183028"/>
<dbReference type="HOGENOM" id="CLU_001357_2_0_1"/>
<dbReference type="InParanoid" id="Q13643"/>
<dbReference type="OMA" id="QWHQTCF"/>
<dbReference type="OrthoDB" id="274660at2759"/>
<dbReference type="PAN-GO" id="Q13643">
    <property type="GO annotations" value="6 GO annotations based on evolutionary models"/>
</dbReference>
<dbReference type="PhylomeDB" id="Q13643"/>
<dbReference type="TreeFam" id="TF314113"/>
<dbReference type="PathwayCommons" id="Q13643"/>
<dbReference type="SignaLink" id="Q13643"/>
<dbReference type="BioGRID-ORCS" id="2275">
    <property type="hits" value="16 hits in 1171 CRISPR screens"/>
</dbReference>
<dbReference type="ChiTaRS" id="FHL3">
    <property type="organism name" value="human"/>
</dbReference>
<dbReference type="EvolutionaryTrace" id="Q13643"/>
<dbReference type="GeneWiki" id="FHL3"/>
<dbReference type="GenomeRNAi" id="2275"/>
<dbReference type="Pharos" id="Q13643">
    <property type="development level" value="Tbio"/>
</dbReference>
<dbReference type="PRO" id="PR:Q13643"/>
<dbReference type="Proteomes" id="UP000005640">
    <property type="component" value="Chromosome 1"/>
</dbReference>
<dbReference type="RNAct" id="Q13643">
    <property type="molecule type" value="protein"/>
</dbReference>
<dbReference type="Bgee" id="ENSG00000183386">
    <property type="expression patterns" value="Expressed in hindlimb stylopod muscle and 120 other cell types or tissues"/>
</dbReference>
<dbReference type="GO" id="GO:0005925">
    <property type="term" value="C:focal adhesion"/>
    <property type="evidence" value="ECO:0007005"/>
    <property type="project" value="UniProtKB"/>
</dbReference>
<dbReference type="GO" id="GO:0005634">
    <property type="term" value="C:nucleus"/>
    <property type="evidence" value="ECO:0000318"/>
    <property type="project" value="GO_Central"/>
</dbReference>
<dbReference type="GO" id="GO:0001725">
    <property type="term" value="C:stress fiber"/>
    <property type="evidence" value="ECO:0000318"/>
    <property type="project" value="GO_Central"/>
</dbReference>
<dbReference type="GO" id="GO:0030018">
    <property type="term" value="C:Z disc"/>
    <property type="evidence" value="ECO:0000318"/>
    <property type="project" value="GO_Central"/>
</dbReference>
<dbReference type="GO" id="GO:0003779">
    <property type="term" value="F:actin binding"/>
    <property type="evidence" value="ECO:0000318"/>
    <property type="project" value="GO_Central"/>
</dbReference>
<dbReference type="GO" id="GO:0003712">
    <property type="term" value="F:transcription coregulator activity"/>
    <property type="evidence" value="ECO:0000318"/>
    <property type="project" value="GO_Central"/>
</dbReference>
<dbReference type="GO" id="GO:0008270">
    <property type="term" value="F:zinc ion binding"/>
    <property type="evidence" value="ECO:0007669"/>
    <property type="project" value="UniProtKB-KW"/>
</dbReference>
<dbReference type="GO" id="GO:0030036">
    <property type="term" value="P:actin cytoskeleton organization"/>
    <property type="evidence" value="ECO:0000318"/>
    <property type="project" value="GO_Central"/>
</dbReference>
<dbReference type="GO" id="GO:0007517">
    <property type="term" value="P:muscle organ development"/>
    <property type="evidence" value="ECO:0000304"/>
    <property type="project" value="ProtInc"/>
</dbReference>
<dbReference type="CDD" id="cd09423">
    <property type="entry name" value="LIM1_FHL3"/>
    <property type="match status" value="1"/>
</dbReference>
<dbReference type="CDD" id="cd09427">
    <property type="entry name" value="LIM2_FHL3"/>
    <property type="match status" value="1"/>
</dbReference>
<dbReference type="CDD" id="cd09346">
    <property type="entry name" value="LIM3_FHL"/>
    <property type="match status" value="1"/>
</dbReference>
<dbReference type="CDD" id="cd09434">
    <property type="entry name" value="LIM4_FHL3"/>
    <property type="match status" value="1"/>
</dbReference>
<dbReference type="FunFam" id="2.10.110.10:FF:000013">
    <property type="entry name" value="Four and a half LIM domains 1"/>
    <property type="match status" value="1"/>
</dbReference>
<dbReference type="FunFam" id="2.10.110.10:FF:000030">
    <property type="entry name" value="Four and a half LIM domains protein 2"/>
    <property type="match status" value="1"/>
</dbReference>
<dbReference type="FunFam" id="2.10.110.10:FF:000064">
    <property type="entry name" value="Four and a half LIM domains protein 3"/>
    <property type="match status" value="1"/>
</dbReference>
<dbReference type="FunFam" id="2.10.110.10:FF:000095">
    <property type="entry name" value="four and a half LIM domains protein 3"/>
    <property type="match status" value="1"/>
</dbReference>
<dbReference type="Gene3D" id="2.10.110.10">
    <property type="entry name" value="Cysteine Rich Protein"/>
    <property type="match status" value="5"/>
</dbReference>
<dbReference type="InterPro" id="IPR056807">
    <property type="entry name" value="LIM_FHL1/2/3/5_N"/>
</dbReference>
<dbReference type="InterPro" id="IPR001781">
    <property type="entry name" value="Znf_LIM"/>
</dbReference>
<dbReference type="PANTHER" id="PTHR24205">
    <property type="entry name" value="FOUR AND A HALF LIM DOMAINS PROTEIN"/>
    <property type="match status" value="1"/>
</dbReference>
<dbReference type="PANTHER" id="PTHR24205:SF5">
    <property type="entry name" value="FOUR AND A HALF LIM DOMAINS PROTEIN 3"/>
    <property type="match status" value="1"/>
</dbReference>
<dbReference type="Pfam" id="PF00412">
    <property type="entry name" value="LIM"/>
    <property type="match status" value="4"/>
</dbReference>
<dbReference type="Pfam" id="PF25076">
    <property type="entry name" value="LIM_FHL2-3_N"/>
    <property type="match status" value="1"/>
</dbReference>
<dbReference type="SMART" id="SM00132">
    <property type="entry name" value="LIM"/>
    <property type="match status" value="4"/>
</dbReference>
<dbReference type="SUPFAM" id="SSF57716">
    <property type="entry name" value="Glucocorticoid receptor-like (DNA-binding domain)"/>
    <property type="match status" value="5"/>
</dbReference>
<dbReference type="PROSITE" id="PS00478">
    <property type="entry name" value="LIM_DOMAIN_1"/>
    <property type="match status" value="4"/>
</dbReference>
<dbReference type="PROSITE" id="PS50023">
    <property type="entry name" value="LIM_DOMAIN_2"/>
    <property type="match status" value="4"/>
</dbReference>
<organism>
    <name type="scientific">Homo sapiens</name>
    <name type="common">Human</name>
    <dbReference type="NCBI Taxonomy" id="9606"/>
    <lineage>
        <taxon>Eukaryota</taxon>
        <taxon>Metazoa</taxon>
        <taxon>Chordata</taxon>
        <taxon>Craniata</taxon>
        <taxon>Vertebrata</taxon>
        <taxon>Euteleostomi</taxon>
        <taxon>Mammalia</taxon>
        <taxon>Eutheria</taxon>
        <taxon>Euarchontoglires</taxon>
        <taxon>Primates</taxon>
        <taxon>Haplorrhini</taxon>
        <taxon>Catarrhini</taxon>
        <taxon>Hominidae</taxon>
        <taxon>Homo</taxon>
    </lineage>
</organism>
<protein>
    <recommendedName>
        <fullName>Four and a half LIM domains protein 3</fullName>
        <shortName>FHL-3</shortName>
    </recommendedName>
    <alternativeName>
        <fullName>Skeletal muscle LIM-protein 2</fullName>
        <shortName>SLIM-2</shortName>
    </alternativeName>
</protein>
<name>FHL3_HUMAN</name>
<gene>
    <name type="primary">FHL3</name>
    <name type="synonym">SLIM2</name>
</gene>
<sequence length="280" mass="31192">MSESFDCAKCNESLYGRKYIQTDSGPYCVPCYDNTFANTCAECQQLIGHDSRELFYEDRHFHEGCFRCCRCQRSLADEPFTCQDSELLCNDCYCSAFSSQCSACGETVMPGSRKLEYGGQTWHEHCFLCSGCEQPLGSRSFVPDKGAHYCVPCYENKFAPRCARCSKTLTQGGVTYRDQPWHRECLVCTGCQTPLAGQQFTSRDEDPYCVACFGELFAPKCSSCKRPIVGLGGGKYVSFEDRHWHHNCFSCARCSTSLVGQGFVPDGDQVLCQGCSQAGP</sequence>
<evidence type="ECO:0000250" key="1">
    <source>
        <dbReference type="UniProtKB" id="Q9R059"/>
    </source>
</evidence>
<evidence type="ECO:0000255" key="2"/>
<evidence type="ECO:0000255" key="3">
    <source>
        <dbReference type="PROSITE-ProRule" id="PRU00125"/>
    </source>
</evidence>
<evidence type="ECO:0000305" key="4"/>
<evidence type="ECO:0007744" key="5">
    <source>
    </source>
</evidence>
<evidence type="ECO:0007829" key="6">
    <source>
        <dbReference type="PDB" id="1WYH"/>
    </source>
</evidence>
<evidence type="ECO:0007829" key="7">
    <source>
        <dbReference type="PDB" id="2CUQ"/>
    </source>
</evidence>
<evidence type="ECO:0007829" key="8">
    <source>
        <dbReference type="PDB" id="2EHE"/>
    </source>
</evidence>
<comment type="function">
    <text evidence="1">Recruited by SOX15 to FOXK1 promoters where it acts as a transcriptional coactivator of FOXK1.</text>
</comment>
<comment type="subunit">
    <text evidence="1">Interacts with SOX15; the interaction recruits FHL3 to FOXK1 promoters where it acts as a transcriptional coactivator of FOXK1.</text>
</comment>
<comment type="interaction">
    <interactant intactId="EBI-741101">
        <id>Q13643</id>
    </interactant>
    <interactant intactId="EBI-2809489">
        <id>Q9NQ94</id>
        <label>A1CF</label>
    </interactant>
    <organismsDiffer>false</organismsDiffer>
    <experiments>3</experiments>
</comment>
<comment type="interaction">
    <interactant intactId="EBI-741101">
        <id>Q13643</id>
    </interactant>
    <interactant intactId="EBI-77818">
        <id>Q13444</id>
        <label>ADAM15</label>
    </interactant>
    <organismsDiffer>false</organismsDiffer>
    <experiments>3</experiments>
</comment>
<comment type="interaction">
    <interactant intactId="EBI-741101">
        <id>Q13643</id>
    </interactant>
    <interactant intactId="EBI-745226">
        <id>Q13155</id>
        <label>AIMP2</label>
    </interactant>
    <organismsDiffer>false</organismsDiffer>
    <experiments>13</experiments>
</comment>
<comment type="interaction">
    <interactant intactId="EBI-741101">
        <id>Q13643</id>
    </interactant>
    <interactant intactId="EBI-2115136">
        <id>P02760</id>
        <label>AMBP</label>
    </interactant>
    <organismsDiffer>false</organismsDiffer>
    <experiments>3</experiments>
</comment>
<comment type="interaction">
    <interactant intactId="EBI-741101">
        <id>Q13643</id>
    </interactant>
    <interactant intactId="EBI-11531560">
        <id>A0A0A0MQZ8</id>
        <label>ANKHD1</label>
    </interactant>
    <organismsDiffer>false</organismsDiffer>
    <experiments>4</experiments>
</comment>
<comment type="interaction">
    <interactant intactId="EBI-741101">
        <id>Q13643</id>
    </interactant>
    <interactant intactId="EBI-948603">
        <id>Q03989</id>
        <label>ARID5A</label>
    </interactant>
    <organismsDiffer>false</organismsDiffer>
    <experiments>3</experiments>
</comment>
<comment type="interaction">
    <interactant intactId="EBI-741101">
        <id>Q13643</id>
    </interactant>
    <interactant intactId="EBI-10254793">
        <id>Q6XD76</id>
        <label>ASCL4</label>
    </interactant>
    <organismsDiffer>false</organismsDiffer>
    <experiments>3</experiments>
</comment>
<comment type="interaction">
    <interactant intactId="EBI-741101">
        <id>Q13643</id>
    </interactant>
    <interactant intactId="EBI-12053927">
        <id>Q9UMQ3</id>
        <label>BARX2</label>
    </interactant>
    <organismsDiffer>false</organismsDiffer>
    <experiments>3</experiments>
</comment>
<comment type="interaction">
    <interactant intactId="EBI-741101">
        <id>Q13643</id>
    </interactant>
    <interactant intactId="EBI-10298364">
        <id>Q9BTE2</id>
        <label>C16orf35</label>
    </interactant>
    <organismsDiffer>false</organismsDiffer>
    <experiments>3</experiments>
</comment>
<comment type="interaction">
    <interactant intactId="EBI-741101">
        <id>Q13643</id>
    </interactant>
    <interactant intactId="EBI-946029">
        <id>Q6P1W5</id>
        <label>C1orf94</label>
    </interactant>
    <organismsDiffer>false</organismsDiffer>
    <experiments>5</experiments>
</comment>
<comment type="interaction">
    <interactant intactId="EBI-741101">
        <id>Q13643</id>
    </interactant>
    <interactant intactId="EBI-12270182">
        <id>Q9NQ75-2</id>
        <label>CASS4</label>
    </interactant>
    <organismsDiffer>false</organismsDiffer>
    <experiments>5</experiments>
</comment>
<comment type="interaction">
    <interactant intactId="EBI-741101">
        <id>Q13643</id>
    </interactant>
    <interactant intactId="EBI-712912">
        <id>Q9HC52</id>
        <label>CBX8</label>
    </interactant>
    <organismsDiffer>false</organismsDiffer>
    <experiments>5</experiments>
</comment>
<comment type="interaction">
    <interactant intactId="EBI-741101">
        <id>Q13643</id>
    </interactant>
    <interactant intactId="EBI-11748295">
        <id>E9PSE9</id>
        <label>CCDC198</label>
    </interactant>
    <organismsDiffer>false</organismsDiffer>
    <experiments>3</experiments>
</comment>
<comment type="interaction">
    <interactant intactId="EBI-741101">
        <id>Q13643</id>
    </interactant>
    <interactant intactId="EBI-10238351">
        <id>Q9NVL8</id>
        <label>CCDC198</label>
    </interactant>
    <organismsDiffer>false</organismsDiffer>
    <experiments>3</experiments>
</comment>
<comment type="interaction">
    <interactant intactId="EBI-741101">
        <id>Q13643</id>
    </interactant>
    <interactant intactId="EBI-12010090">
        <id>A8MYP8</id>
        <label>CIMAP1B</label>
    </interactant>
    <organismsDiffer>false</organismsDiffer>
    <experiments>3</experiments>
</comment>
<comment type="interaction">
    <interactant intactId="EBI-741101">
        <id>Q13643</id>
    </interactant>
    <interactant intactId="EBI-16435545">
        <id>A0A0S2Z364</id>
        <label>CLCN2</label>
    </interactant>
    <organismsDiffer>false</organismsDiffer>
    <experiments>3</experiments>
</comment>
<comment type="interaction">
    <interactant intactId="EBI-741101">
        <id>Q13643</id>
    </interactant>
    <interactant intactId="EBI-741032">
        <id>Q8NE01</id>
        <label>CNNM3</label>
    </interactant>
    <organismsDiffer>false</organismsDiffer>
    <experiments>9</experiments>
</comment>
<comment type="interaction">
    <interactant intactId="EBI-741101">
        <id>Q13643</id>
    </interactant>
    <interactant intactId="EBI-10269984">
        <id>Q8NE01-3</id>
        <label>CNNM3</label>
    </interactant>
    <organismsDiffer>false</organismsDiffer>
    <experiments>3</experiments>
</comment>
<comment type="interaction">
    <interactant intactId="EBI-741101">
        <id>Q13643</id>
    </interactant>
    <interactant intactId="EBI-10192698">
        <id>Q02930-3</id>
        <label>CREB5</label>
    </interactant>
    <organismsDiffer>false</organismsDiffer>
    <experiments>3</experiments>
</comment>
<comment type="interaction">
    <interactant intactId="EBI-741101">
        <id>Q13643</id>
    </interactant>
    <interactant intactId="EBI-12925520">
        <id>Q6Q6R5-3</id>
        <label>CRIP3</label>
    </interactant>
    <organismsDiffer>false</organismsDiffer>
    <experiments>3</experiments>
</comment>
<comment type="interaction">
    <interactant intactId="EBI-741101">
        <id>Q13643</id>
    </interactant>
    <interactant intactId="EBI-750444">
        <id>P53672</id>
        <label>CRYBA2</label>
    </interactant>
    <organismsDiffer>false</organismsDiffer>
    <experiments>3</experiments>
</comment>
<comment type="interaction">
    <interactant intactId="EBI-741101">
        <id>Q13643</id>
    </interactant>
    <interactant intactId="EBI-2872294">
        <id>P09603</id>
        <label>CSF1</label>
    </interactant>
    <organismsDiffer>false</organismsDiffer>
    <experiments>3</experiments>
</comment>
<comment type="interaction">
    <interactant intactId="EBI-741101">
        <id>Q13643</id>
    </interactant>
    <interactant intactId="EBI-741533">
        <id>P56545</id>
        <label>CTBP2</label>
    </interactant>
    <organismsDiffer>false</organismsDiffer>
    <experiments>4</experiments>
</comment>
<comment type="interaction">
    <interactant intactId="EBI-741101">
        <id>Q13643</id>
    </interactant>
    <interactant intactId="EBI-3867333">
        <id>A8MQ03</id>
        <label>CYSRT1</label>
    </interactant>
    <organismsDiffer>false</organismsDiffer>
    <experiments>3</experiments>
</comment>
<comment type="interaction">
    <interactant intactId="EBI-741101">
        <id>Q13643</id>
    </interactant>
    <interactant intactId="EBI-10173222">
        <id>A2VCK2</id>
        <label>DCDC2B</label>
    </interactant>
    <organismsDiffer>false</organismsDiffer>
    <experiments>6</experiments>
</comment>
<comment type="interaction">
    <interactant intactId="EBI-741101">
        <id>Q13643</id>
    </interactant>
    <interactant intactId="EBI-12000556">
        <id>Q9Y2H0-1</id>
        <label>DLGAP4</label>
    </interactant>
    <organismsDiffer>false</organismsDiffer>
    <experiments>3</experiments>
</comment>
<comment type="interaction">
    <interactant intactId="EBI-741101">
        <id>Q13643</id>
    </interactant>
    <interactant intactId="EBI-9679045">
        <id>Q9NQL9</id>
        <label>DMRT3</label>
    </interactant>
    <organismsDiffer>false</organismsDiffer>
    <experiments>3</experiments>
</comment>
<comment type="interaction">
    <interactant intactId="EBI-741101">
        <id>Q13643</id>
    </interactant>
    <interactant intactId="EBI-7779316">
        <id>A0AVK6</id>
        <label>E2F8</label>
    </interactant>
    <organismsDiffer>false</organismsDiffer>
    <experiments>3</experiments>
</comment>
<comment type="interaction">
    <interactant intactId="EBI-741101">
        <id>Q13643</id>
    </interactant>
    <interactant intactId="EBI-10251535">
        <id>Q6NXP0</id>
        <label>EFCAB12</label>
    </interactant>
    <organismsDiffer>false</organismsDiffer>
    <experiments>3</experiments>
</comment>
<comment type="interaction">
    <interactant intactId="EBI-741101">
        <id>Q13643</id>
    </interactant>
    <interactant intactId="EBI-10244652">
        <id>Q5JZY3-3</id>
        <label>EPHA10</label>
    </interactant>
    <organismsDiffer>false</organismsDiffer>
    <experiments>3</experiments>
</comment>
<comment type="interaction">
    <interactant intactId="EBI-741101">
        <id>Q13643</id>
    </interactant>
    <interactant intactId="EBI-6255981">
        <id>Q7L775</id>
        <label>EPM2AIP1</label>
    </interactant>
    <organismsDiffer>false</organismsDiffer>
    <experiments>3</experiments>
</comment>
<comment type="interaction">
    <interactant intactId="EBI-741101">
        <id>Q13643</id>
    </interactant>
    <interactant intactId="EBI-3943864">
        <id>Q8N9I5</id>
        <label>FADS6</label>
    </interactant>
    <organismsDiffer>false</organismsDiffer>
    <experiments>3</experiments>
</comment>
<comment type="interaction">
    <interactant intactId="EBI-741101">
        <id>Q13643</id>
    </interactant>
    <interactant intactId="EBI-1752811">
        <id>Q9BQ89</id>
        <label>FAM110A</label>
    </interactant>
    <organismsDiffer>false</organismsDiffer>
    <experiments>3</experiments>
</comment>
<comment type="interaction">
    <interactant intactId="EBI-741101">
        <id>Q13643</id>
    </interactant>
    <interactant intactId="EBI-2807642">
        <id>Q8WU58</id>
        <label>FAM222B</label>
    </interactant>
    <organismsDiffer>false</organismsDiffer>
    <experiments>3</experiments>
</comment>
<comment type="interaction">
    <interactant intactId="EBI-741101">
        <id>Q13643</id>
    </interactant>
    <interactant intactId="EBI-6658203">
        <id>Q86YD7</id>
        <label>FAM90A1</label>
    </interactant>
    <organismsDiffer>false</organismsDiffer>
    <experiments>7</experiments>
</comment>
<comment type="interaction">
    <interactant intactId="EBI-741101">
        <id>Q13643</id>
    </interactant>
    <interactant intactId="EBI-744419">
        <id>Q96D16</id>
        <label>FBXL18</label>
    </interactant>
    <organismsDiffer>false</organismsDiffer>
    <experiments>3</experiments>
</comment>
<comment type="interaction">
    <interactant intactId="EBI-741101">
        <id>Q13643</id>
    </interactant>
    <interactant intactId="EBI-3893419">
        <id>P15408</id>
        <label>FOSL2</label>
    </interactant>
    <organismsDiffer>false</organismsDiffer>
    <experiments>4</experiments>
</comment>
<comment type="interaction">
    <interactant intactId="EBI-741101">
        <id>Q13643</id>
    </interactant>
    <interactant intactId="EBI-11749712">
        <id>Q96NZ1</id>
        <label>FOXN4</label>
    </interactant>
    <organismsDiffer>false</organismsDiffer>
    <experiments>4</experiments>
</comment>
<comment type="interaction">
    <interactant intactId="EBI-741101">
        <id>Q13643</id>
    </interactant>
    <interactant intactId="EBI-752049">
        <id>Q8NEG0</id>
        <label>GARIN6</label>
    </interactant>
    <organismsDiffer>false</organismsDiffer>
    <experiments>3</experiments>
</comment>
<comment type="interaction">
    <interactant intactId="EBI-741101">
        <id>Q13643</id>
    </interactant>
    <interactant intactId="EBI-9090198">
        <id>P15976-2</id>
        <label>GATA1</label>
    </interactant>
    <organismsDiffer>false</organismsDiffer>
    <experiments>4</experiments>
</comment>
<comment type="interaction">
    <interactant intactId="EBI-741101">
        <id>Q13643</id>
    </interactant>
    <interactant intactId="EBI-2806671">
        <id>P23769</id>
        <label>GATA2</label>
    </interactant>
    <organismsDiffer>false</organismsDiffer>
    <experiments>5</experiments>
</comment>
<comment type="interaction">
    <interactant intactId="EBI-741101">
        <id>Q13643</id>
    </interactant>
    <interactant intactId="EBI-10188645">
        <id>O75603</id>
        <label>GCM2</label>
    </interactant>
    <organismsDiffer>false</organismsDiffer>
    <experiments>11</experiments>
</comment>
<comment type="interaction">
    <interactant intactId="EBI-741101">
        <id>Q13643</id>
    </interactant>
    <interactant intactId="EBI-11978177">
        <id>Q96NT3-2</id>
        <label>GUCD1</label>
    </interactant>
    <organismsDiffer>false</organismsDiffer>
    <experiments>3</experiments>
</comment>
<comment type="interaction">
    <interactant intactId="EBI-741101">
        <id>Q13643</id>
    </interactant>
    <interactant intactId="EBI-11956675">
        <id>Q9GZV7</id>
        <label>HAPLN2</label>
    </interactant>
    <organismsDiffer>false</organismsDiffer>
    <experiments>3</experiments>
</comment>
<comment type="interaction">
    <interactant intactId="EBI-741101">
        <id>Q13643</id>
    </interactant>
    <interactant intactId="EBI-692891">
        <id>Q86Z02</id>
        <label>HIPK1</label>
    </interactant>
    <organismsDiffer>false</organismsDiffer>
    <experiments>6</experiments>
</comment>
<comment type="interaction">
    <interactant intactId="EBI-741101">
        <id>Q13643</id>
    </interactant>
    <interactant intactId="EBI-12025238">
        <id>Q86Z02-4</id>
        <label>HIPK1</label>
    </interactant>
    <organismsDiffer>false</organismsDiffer>
    <experiments>3</experiments>
</comment>
<comment type="interaction">
    <interactant intactId="EBI-741101">
        <id>Q13643</id>
    </interactant>
    <interactant intactId="EBI-740785">
        <id>P49639</id>
        <label>HOXA1</label>
    </interactant>
    <organismsDiffer>false</organismsDiffer>
    <experiments>3</experiments>
</comment>
<comment type="interaction">
    <interactant intactId="EBI-741101">
        <id>Q13643</id>
    </interactant>
    <interactant intactId="EBI-7116203">
        <id>O75031</id>
        <label>HSF2BP</label>
    </interactant>
    <organismsDiffer>false</organismsDiffer>
    <experiments>3</experiments>
</comment>
<comment type="interaction">
    <interactant intactId="EBI-741101">
        <id>Q13643</id>
    </interactant>
    <interactant intactId="EBI-466029">
        <id>P42858</id>
        <label>HTT</label>
    </interactant>
    <organismsDiffer>false</organismsDiffer>
    <experiments>9</experiments>
</comment>
<comment type="interaction">
    <interactant intactId="EBI-741101">
        <id>Q13643</id>
    </interactant>
    <interactant intactId="EBI-2806068">
        <id>Q12891</id>
        <label>HYAL2</label>
    </interactant>
    <organismsDiffer>false</organismsDiffer>
    <experiments>3</experiments>
</comment>
<comment type="interaction">
    <interactant intactId="EBI-741101">
        <id>Q13643</id>
    </interactant>
    <interactant intactId="EBI-11065686">
        <id>Q9BYI3</id>
        <label>HYCC1</label>
    </interactant>
    <organismsDiffer>false</organismsDiffer>
    <experiments>3</experiments>
</comment>
<comment type="interaction">
    <interactant intactId="EBI-741101">
        <id>Q13643</id>
    </interactant>
    <interactant intactId="EBI-8638439">
        <id>Q8IYA8</id>
        <label>IHO1</label>
    </interactant>
    <organismsDiffer>false</organismsDiffer>
    <experiments>4</experiments>
</comment>
<comment type="interaction">
    <interactant intactId="EBI-741101">
        <id>Q13643</id>
    </interactant>
    <interactant intactId="EBI-747204">
        <id>Q9UKT9</id>
        <label>IKZF3</label>
    </interactant>
    <organismsDiffer>false</organismsDiffer>
    <experiments>4</experiments>
</comment>
<comment type="interaction">
    <interactant intactId="EBI-741101">
        <id>Q13643</id>
    </interactant>
    <interactant intactId="EBI-1223434">
        <id>P18084</id>
        <label>ITGB5</label>
    </interactant>
    <organismsDiffer>false</organismsDiffer>
    <experiments>5</experiments>
</comment>
<comment type="interaction">
    <interactant intactId="EBI-741101">
        <id>Q13643</id>
    </interactant>
    <interactant intactId="EBI-2556193">
        <id>Q63ZY3</id>
        <label>KANK2</label>
    </interactant>
    <organismsDiffer>false</organismsDiffer>
    <experiments>3</experiments>
</comment>
<comment type="interaction">
    <interactant intactId="EBI-741101">
        <id>Q13643</id>
    </interactant>
    <interactant intactId="EBI-11046235">
        <id>Q9ULH0-2</id>
        <label>KIDINS220</label>
    </interactant>
    <organismsDiffer>false</organismsDiffer>
    <experiments>3</experiments>
</comment>
<comment type="interaction">
    <interactant intactId="EBI-741101">
        <id>Q13643</id>
    </interactant>
    <interactant intactId="EBI-10254473">
        <id>Q6UWL6</id>
        <label>KIRREL2</label>
    </interactant>
    <organismsDiffer>false</organismsDiffer>
    <experiments>3</experiments>
</comment>
<comment type="interaction">
    <interactant intactId="EBI-741101">
        <id>Q13643</id>
    </interactant>
    <interactant intactId="EBI-12794590">
        <id>Q6UWL6-5</id>
        <label>KIRREL2</label>
    </interactant>
    <organismsDiffer>false</organismsDiffer>
    <experiments>3</experiments>
</comment>
<comment type="interaction">
    <interactant intactId="EBI-741101">
        <id>Q13643</id>
    </interactant>
    <interactant intactId="EBI-750750">
        <id>Q9Y4X4</id>
        <label>KLF12</label>
    </interactant>
    <organismsDiffer>false</organismsDiffer>
    <experiments>3</experiments>
</comment>
<comment type="interaction">
    <interactant intactId="EBI-741101">
        <id>Q13643</id>
    </interactant>
    <interactant intactId="EBI-8472267">
        <id>P57682</id>
        <label>KLF3</label>
    </interactant>
    <organismsDiffer>false</organismsDiffer>
    <experiments>11</experiments>
</comment>
<comment type="interaction">
    <interactant intactId="EBI-741101">
        <id>Q13643</id>
    </interactant>
    <interactant intactId="EBI-10981970">
        <id>Q5T749</id>
        <label>KPRP</label>
    </interactant>
    <organismsDiffer>false</organismsDiffer>
    <experiments>4</experiments>
</comment>
<comment type="interaction">
    <interactant intactId="EBI-741101">
        <id>Q13643</id>
    </interactant>
    <interactant intactId="EBI-10210845">
        <id>P59990</id>
        <label>KRTAP12-1</label>
    </interactant>
    <organismsDiffer>false</organismsDiffer>
    <experiments>6</experiments>
</comment>
<comment type="interaction">
    <interactant intactId="EBI-741101">
        <id>Q13643</id>
    </interactant>
    <interactant intactId="EBI-10176379">
        <id>P59991</id>
        <label>KRTAP12-2</label>
    </interactant>
    <organismsDiffer>false</organismsDiffer>
    <experiments>6</experiments>
</comment>
<comment type="interaction">
    <interactant intactId="EBI-741101">
        <id>Q13643</id>
    </interactant>
    <interactant intactId="EBI-7951092">
        <id>Q96EK9</id>
        <label>KTI12</label>
    </interactant>
    <organismsDiffer>false</organismsDiffer>
    <experiments>3</experiments>
</comment>
<comment type="interaction">
    <interactant intactId="EBI-741101">
        <id>Q13643</id>
    </interactant>
    <interactant intactId="EBI-3506895">
        <id>Q9NRM7</id>
        <label>LATS2</label>
    </interactant>
    <organismsDiffer>false</organismsDiffer>
    <experiments>4</experiments>
</comment>
<comment type="interaction">
    <interactant intactId="EBI-741101">
        <id>Q13643</id>
    </interactant>
    <interactant intactId="EBI-11659791">
        <id>P01229</id>
        <label>LHB</label>
    </interactant>
    <organismsDiffer>false</organismsDiffer>
    <experiments>3</experiments>
</comment>
<comment type="interaction">
    <interactant intactId="EBI-741101">
        <id>Q13643</id>
    </interactant>
    <interactant intactId="EBI-739696">
        <id>P25791</id>
        <label>LMO2</label>
    </interactant>
    <organismsDiffer>false</organismsDiffer>
    <experiments>3</experiments>
</comment>
<comment type="interaction">
    <interactant intactId="EBI-741101">
        <id>Q13643</id>
    </interactant>
    <interactant intactId="EBI-2798728">
        <id>P61968</id>
        <label>LMO4</label>
    </interactant>
    <organismsDiffer>false</organismsDiffer>
    <experiments>3</experiments>
</comment>
<comment type="interaction">
    <interactant intactId="EBI-741101">
        <id>Q13643</id>
    </interactant>
    <interactant intactId="EBI-2340947">
        <id>Q8N448</id>
        <label>LNX2</label>
    </interactant>
    <organismsDiffer>false</organismsDiffer>
    <experiments>4</experiments>
</comment>
<comment type="interaction">
    <interactant intactId="EBI-741101">
        <id>Q13643</id>
    </interactant>
    <interactant intactId="EBI-992788">
        <id>P50281</id>
        <label>MMP14</label>
    </interactant>
    <organismsDiffer>false</organismsDiffer>
    <experiments>3</experiments>
</comment>
<comment type="interaction">
    <interactant intactId="EBI-741101">
        <id>Q13643</id>
    </interactant>
    <interactant intactId="EBI-1045440">
        <id>Q9HC36</id>
        <label>MRM3</label>
    </interactant>
    <organismsDiffer>false</organismsDiffer>
    <experiments>8</experiments>
</comment>
<comment type="interaction">
    <interactant intactId="EBI-741101">
        <id>Q13643</id>
    </interactant>
    <interactant intactId="EBI-5325236">
        <id>Q9P0M9</id>
        <label>MRPL27</label>
    </interactant>
    <organismsDiffer>false</organismsDiffer>
    <experiments>6</experiments>
</comment>
<comment type="interaction">
    <interactant intactId="EBI-741101">
        <id>Q13643</id>
    </interactant>
    <interactant intactId="EBI-2855755">
        <id>Q96E11</id>
        <label>MRRF</label>
    </interactant>
    <organismsDiffer>false</organismsDiffer>
    <experiments>3</experiments>
</comment>
<comment type="interaction">
    <interactant intactId="EBI-741101">
        <id>Q13643</id>
    </interactant>
    <interactant intactId="EBI-10699187">
        <id>Q8IXL7-2</id>
        <label>MSRB3</label>
    </interactant>
    <organismsDiffer>false</organismsDiffer>
    <experiments>3</experiments>
</comment>
<comment type="interaction">
    <interactant intactId="EBI-741101">
        <id>Q13643</id>
    </interactant>
    <interactant intactId="EBI-9088235">
        <id>A2RUH7</id>
        <label>MYBPHL</label>
    </interactant>
    <organismsDiffer>false</organismsDiffer>
    <experiments>3</experiments>
</comment>
<comment type="interaction">
    <interactant intactId="EBI-741101">
        <id>Q13643</id>
    </interactant>
    <interactant intactId="EBI-5662487">
        <id>Q8TDC0</id>
        <label>MYOZ3</label>
    </interactant>
    <organismsDiffer>false</organismsDiffer>
    <experiments>3</experiments>
</comment>
<comment type="interaction">
    <interactant intactId="EBI-741101">
        <id>Q13643</id>
    </interactant>
    <interactant intactId="EBI-2858213">
        <id>Q86VE0</id>
        <label>MYPOP</label>
    </interactant>
    <organismsDiffer>false</organismsDiffer>
    <experiments>3</experiments>
</comment>
<comment type="interaction">
    <interactant intactId="EBI-741101">
        <id>Q13643</id>
    </interactant>
    <interactant intactId="EBI-1246261">
        <id>O14561</id>
        <label>NDUFAB1</label>
    </interactant>
    <organismsDiffer>false</organismsDiffer>
    <experiments>5</experiments>
</comment>
<comment type="interaction">
    <interactant intactId="EBI-741101">
        <id>Q13643</id>
    </interactant>
    <interactant intactId="EBI-10182841">
        <id>O15460-2</id>
        <label>P4HA2</label>
    </interactant>
    <organismsDiffer>false</organismsDiffer>
    <experiments>3</experiments>
</comment>
<comment type="interaction">
    <interactant intactId="EBI-741101">
        <id>Q13643</id>
    </interactant>
    <interactant intactId="EBI-2562092">
        <id>Q86TB9</id>
        <label>PATL1</label>
    </interactant>
    <organismsDiffer>false</organismsDiffer>
    <experiments>8</experiments>
</comment>
<comment type="interaction">
    <interactant intactId="EBI-741101">
        <id>Q13643</id>
    </interactant>
    <interactant intactId="EBI-745085">
        <id>Q96BD5</id>
        <label>PHF21A</label>
    </interactant>
    <organismsDiffer>false</organismsDiffer>
    <experiments>7</experiments>
</comment>
<comment type="interaction">
    <interactant intactId="EBI-741101">
        <id>Q13643</id>
    </interactant>
    <interactant intactId="EBI-10243636">
        <id>Q5BN46</id>
        <label>PIERCE1</label>
    </interactant>
    <organismsDiffer>false</organismsDiffer>
    <experiments>3</experiments>
</comment>
<comment type="interaction">
    <interactant intactId="EBI-741101">
        <id>Q13643</id>
    </interactant>
    <interactant intactId="EBI-12305735">
        <id>Q5BN46-2</id>
        <label>PIERCE1</label>
    </interactant>
    <organismsDiffer>false</organismsDiffer>
    <experiments>3</experiments>
</comment>
<comment type="interaction">
    <interactant intactId="EBI-741101">
        <id>Q13643</id>
    </interactant>
    <interactant intactId="EBI-10987518">
        <id>Q99959-2</id>
        <label>PKP2</label>
    </interactant>
    <organismsDiffer>false</organismsDiffer>
    <experiments>3</experiments>
</comment>
<comment type="interaction">
    <interactant intactId="EBI-741101">
        <id>Q13643</id>
    </interactant>
    <interactant intactId="EBI-11741362">
        <id>Q96PX9</id>
        <label>PLEKHG4B</label>
    </interactant>
    <organismsDiffer>false</organismsDiffer>
    <experiments>4</experiments>
</comment>
<comment type="interaction">
    <interactant intactId="EBI-741101">
        <id>Q13643</id>
    </interactant>
    <interactant intactId="EBI-11986293">
        <id>P0CG20</id>
        <label>PRR35</label>
    </interactant>
    <organismsDiffer>false</organismsDiffer>
    <experiments>3</experiments>
</comment>
<comment type="interaction">
    <interactant intactId="EBI-741101">
        <id>Q13643</id>
    </interactant>
    <interactant intactId="EBI-1567866">
        <id>Q6MZQ0</id>
        <label>PRR5L</label>
    </interactant>
    <organismsDiffer>false</organismsDiffer>
    <experiments>3</experiments>
</comment>
<comment type="interaction">
    <interactant intactId="EBI-741101">
        <id>Q13643</id>
    </interactant>
    <interactant intactId="EBI-78260">
        <id>P29350</id>
        <label>PTPN6</label>
    </interactant>
    <organismsDiffer>false</organismsDiffer>
    <experiments>3</experiments>
</comment>
<comment type="interaction">
    <interactant intactId="EBI-741101">
        <id>Q13643</id>
    </interactant>
    <interactant intactId="EBI-2798044">
        <id>Q2TAL8</id>
        <label>QRICH1</label>
    </interactant>
    <organismsDiffer>false</organismsDiffer>
    <experiments>7</experiments>
</comment>
<comment type="interaction">
    <interactant intactId="EBI-741101">
        <id>Q13643</id>
    </interactant>
    <interactant intactId="EBI-80739">
        <id>O60216</id>
        <label>RAD21</label>
    </interactant>
    <organismsDiffer>false</organismsDiffer>
    <experiments>4</experiments>
</comment>
<comment type="interaction">
    <interactant intactId="EBI-741101">
        <id>Q13643</id>
    </interactant>
    <interactant intactId="EBI-12917066">
        <id>Q9NYN1</id>
        <label>RASL12</label>
    </interactant>
    <organismsDiffer>false</organismsDiffer>
    <experiments>3</experiments>
</comment>
<comment type="interaction">
    <interactant intactId="EBI-741101">
        <id>Q13643</id>
    </interactant>
    <interactant intactId="EBI-742557">
        <id>P48380</id>
        <label>RFX3</label>
    </interactant>
    <organismsDiffer>false</organismsDiffer>
    <experiments>4</experiments>
</comment>
<comment type="interaction">
    <interactant intactId="EBI-741101">
        <id>Q13643</id>
    </interactant>
    <interactant intactId="EBI-746555">
        <id>Q8TAI7</id>
        <label>RHEBL1</label>
    </interactant>
    <organismsDiffer>false</organismsDiffer>
    <experiments>3</experiments>
</comment>
<comment type="interaction">
    <interactant intactId="EBI-741101">
        <id>Q13643</id>
    </interactant>
    <interactant intactId="EBI-748350">
        <id>Q9UHP6</id>
        <label>RSPH14</label>
    </interactant>
    <organismsDiffer>false</organismsDiffer>
    <experiments>3</experiments>
</comment>
<comment type="interaction">
    <interactant intactId="EBI-741101">
        <id>Q13643</id>
    </interactant>
    <interactant intactId="EBI-751683">
        <id>Q9UHR5</id>
        <label>SAP30BP</label>
    </interactant>
    <organismsDiffer>false</organismsDiffer>
    <experiments>6</experiments>
</comment>
<comment type="interaction">
    <interactant intactId="EBI-741101">
        <id>Q13643</id>
    </interactant>
    <interactant intactId="EBI-3957636">
        <id>Q8IYX7</id>
        <label>SAXO1</label>
    </interactant>
    <organismsDiffer>false</organismsDiffer>
    <experiments>9</experiments>
</comment>
<comment type="interaction">
    <interactant intactId="EBI-741101">
        <id>Q13643</id>
    </interactant>
    <interactant intactId="EBI-12000762">
        <id>Q7Z5V6-2</id>
        <label>SAXO4</label>
    </interactant>
    <organismsDiffer>false</organismsDiffer>
    <experiments>3</experiments>
</comment>
<comment type="interaction">
    <interactant intactId="EBI-741101">
        <id>Q13643</id>
    </interactant>
    <interactant intactId="EBI-2683289">
        <id>Q86WG5</id>
        <label>SBF2</label>
    </interactant>
    <organismsDiffer>false</organismsDiffer>
    <experiments>3</experiments>
</comment>
<comment type="interaction">
    <interactant intactId="EBI-741101">
        <id>Q13643</id>
    </interactant>
    <interactant intactId="EBI-727004">
        <id>O00560</id>
        <label>SDCBP</label>
    </interactant>
    <organismsDiffer>false</organismsDiffer>
    <experiments>3</experiments>
</comment>
<comment type="interaction">
    <interactant intactId="EBI-741101">
        <id>Q13643</id>
    </interactant>
    <interactant intactId="EBI-3956977">
        <id>Q5VZ18</id>
        <label>SHE</label>
    </interactant>
    <organismsDiffer>false</organismsDiffer>
    <experiments>3</experiments>
</comment>
<comment type="interaction">
    <interactant intactId="EBI-741101">
        <id>Q13643</id>
    </interactant>
    <interactant intactId="EBI-10269374">
        <id>Q8ND83</id>
        <label>SLAIN1</label>
    </interactant>
    <organismsDiffer>false</organismsDiffer>
    <experiments>6</experiments>
</comment>
<comment type="interaction">
    <interactant intactId="EBI-741101">
        <id>Q13643</id>
    </interactant>
    <interactant intactId="EBI-10281975">
        <id>Q96AG3</id>
        <label>SLC25A46</label>
    </interactant>
    <organismsDiffer>false</organismsDiffer>
    <experiments>6</experiments>
</comment>
<comment type="interaction">
    <interactant intactId="EBI-741101">
        <id>Q13643</id>
    </interactant>
    <interactant intactId="EBI-10265585">
        <id>Q8N4M1</id>
        <label>SLC44A3</label>
    </interactant>
    <organismsDiffer>false</organismsDiffer>
    <experiments>3</experiments>
</comment>
<comment type="interaction">
    <interactant intactId="EBI-741101">
        <id>Q13643</id>
    </interactant>
    <interactant intactId="EBI-750559">
        <id>O95391</id>
        <label>SLU7</label>
    </interactant>
    <organismsDiffer>false</organismsDiffer>
    <experiments>3</experiments>
</comment>
<comment type="interaction">
    <interactant intactId="EBI-741101">
        <id>Q13643</id>
    </interactant>
    <interactant intactId="EBI-372475">
        <id>P14678-2</id>
        <label>SNRPB</label>
    </interactant>
    <organismsDiffer>false</organismsDiffer>
    <experiments>3</experiments>
</comment>
<comment type="interaction">
    <interactant intactId="EBI-741101">
        <id>Q13643</id>
    </interactant>
    <interactant intactId="EBI-766589">
        <id>P09234</id>
        <label>SNRPC</label>
    </interactant>
    <organismsDiffer>false</organismsDiffer>
    <experiments>3</experiments>
</comment>
<comment type="interaction">
    <interactant intactId="EBI-741101">
        <id>Q13643</id>
    </interactant>
    <interactant intactId="EBI-624585">
        <id>P62308</id>
        <label>SNRPG</label>
    </interactant>
    <organismsDiffer>false</organismsDiffer>
    <experiments>6</experiments>
</comment>
<comment type="interaction">
    <interactant intactId="EBI-741101">
        <id>Q13643</id>
    </interactant>
    <interactant intactId="EBI-751020">
        <id>Q9P2T0</id>
        <label>SPMAP2</label>
    </interactant>
    <organismsDiffer>false</organismsDiffer>
    <experiments>4</experiments>
</comment>
<comment type="interaction">
    <interactant intactId="EBI-741101">
        <id>Q13643</id>
    </interactant>
    <interactant intactId="EBI-8787464">
        <id>Q9NU19</id>
        <label>TBC1D22B</label>
    </interactant>
    <organismsDiffer>false</organismsDiffer>
    <experiments>3</experiments>
</comment>
<comment type="interaction">
    <interactant intactId="EBI-741101">
        <id>Q13643</id>
    </interactant>
    <interactant intactId="EBI-741350">
        <id>Q9BT49</id>
        <label>THAP7</label>
    </interactant>
    <organismsDiffer>false</organismsDiffer>
    <experiments>3</experiments>
</comment>
<comment type="interaction">
    <interactant intactId="EBI-741101">
        <id>Q13643</id>
    </interactant>
    <interactant intactId="EBI-11741437">
        <id>Q08117-2</id>
        <label>TLE5</label>
    </interactant>
    <organismsDiffer>false</organismsDiffer>
    <experiments>4</experiments>
</comment>
<comment type="interaction">
    <interactant intactId="EBI-741101">
        <id>Q13643</id>
    </interactant>
    <interactant intactId="EBI-7100456">
        <id>Q6UXF1</id>
        <label>TMEM108</label>
    </interactant>
    <organismsDiffer>false</organismsDiffer>
    <experiments>3</experiments>
</comment>
<comment type="interaction">
    <interactant intactId="EBI-741101">
        <id>Q13643</id>
    </interactant>
    <interactant intactId="EBI-712598">
        <id>P62328</id>
        <label>TMSB4X</label>
    </interactant>
    <organismsDiffer>false</organismsDiffer>
    <experiments>3</experiments>
</comment>
<comment type="interaction">
    <interactant intactId="EBI-741101">
        <id>Q13643</id>
    </interactant>
    <interactant intactId="EBI-2514069">
        <id>Q96JJ7</id>
        <label>TMX3</label>
    </interactant>
    <organismsDiffer>false</organismsDiffer>
    <experiments>3</experiments>
</comment>
<comment type="interaction">
    <interactant intactId="EBI-741101">
        <id>Q13643</id>
    </interactant>
    <interactant intactId="EBI-10178070">
        <id>G5E9N2</id>
        <label>TRO</label>
    </interactant>
    <organismsDiffer>false</organismsDiffer>
    <experiments>3</experiments>
</comment>
<comment type="interaction">
    <interactant intactId="EBI-741101">
        <id>Q13643</id>
    </interactant>
    <interactant intactId="EBI-10241197">
        <id>Q3SY00</id>
        <label>TSGA10IP</label>
    </interactant>
    <organismsDiffer>false</organismsDiffer>
    <experiments>5</experiments>
</comment>
<comment type="interaction">
    <interactant intactId="EBI-741101">
        <id>Q13643</id>
    </interactant>
    <interactant intactId="EBI-7844656">
        <id>Q6ZVT0</id>
        <label>TTLL10</label>
    </interactant>
    <organismsDiffer>false</organismsDiffer>
    <experiments>3</experiments>
</comment>
<comment type="interaction">
    <interactant intactId="EBI-741101">
        <id>Q13643</id>
    </interactant>
    <interactant intactId="EBI-11979997">
        <id>Q6ZVT0-3</id>
        <label>TTLL10</label>
    </interactant>
    <organismsDiffer>false</organismsDiffer>
    <experiments>3</experiments>
</comment>
<comment type="interaction">
    <interactant intactId="EBI-741101">
        <id>Q13643</id>
    </interactant>
    <interactant intactId="EBI-2551023">
        <id>Q6PEY2</id>
        <label>TUBA3E</label>
    </interactant>
    <organismsDiffer>false</organismsDiffer>
    <experiments>3</experiments>
</comment>
<comment type="interaction">
    <interactant intactId="EBI-741101">
        <id>Q13643</id>
    </interactant>
    <interactant intactId="EBI-1383454">
        <id>P29597</id>
        <label>TYK2</label>
    </interactant>
    <organismsDiffer>false</organismsDiffer>
    <experiments>6</experiments>
</comment>
<comment type="interaction">
    <interactant intactId="EBI-741101">
        <id>Q13643</id>
    </interactant>
    <interactant intactId="EBI-742060">
        <id>Q8TAI1</id>
        <label>TYMSOS</label>
    </interactant>
    <organismsDiffer>false</organismsDiffer>
    <experiments>3</experiments>
</comment>
<comment type="interaction">
    <interactant intactId="EBI-741101">
        <id>Q13643</id>
    </interactant>
    <interactant intactId="EBI-10258181">
        <id>Q7Z7E8-2</id>
        <label>UBE2Q1</label>
    </interactant>
    <organismsDiffer>false</organismsDiffer>
    <experiments>3</experiments>
</comment>
<comment type="interaction">
    <interactant intactId="EBI-741101">
        <id>Q13643</id>
    </interactant>
    <interactant intactId="EBI-11747707">
        <id>B2RUY7</id>
        <label>VWC2L</label>
    </interactant>
    <organismsDiffer>false</organismsDiffer>
    <experiments>4</experiments>
</comment>
<comment type="interaction">
    <interactant intactId="EBI-741101">
        <id>Q13643</id>
    </interactant>
    <interactant intactId="EBI-12032042">
        <id>Q64LD2-2</id>
        <label>WDR25</label>
    </interactant>
    <organismsDiffer>false</organismsDiffer>
    <experiments>3</experiments>
</comment>
<comment type="interaction">
    <interactant intactId="EBI-741101">
        <id>Q13643</id>
    </interactant>
    <interactant intactId="EBI-3937908">
        <id>Q8WYQ9</id>
        <label>ZCCHC14</label>
    </interactant>
    <organismsDiffer>false</organismsDiffer>
    <experiments>3</experiments>
</comment>
<comment type="interaction">
    <interactant intactId="EBI-741101">
        <id>Q13643</id>
    </interactant>
    <interactant intactId="EBI-374248">
        <id>P26651</id>
        <label>ZFP36</label>
    </interactant>
    <organismsDiffer>false</organismsDiffer>
    <experiments>4</experiments>
</comment>
<comment type="interaction">
    <interactant intactId="EBI-741101">
        <id>Q13643</id>
    </interactant>
    <interactant intactId="EBI-740727">
        <id>Q8TAU3</id>
        <label>ZNF417</label>
    </interactant>
    <organismsDiffer>false</organismsDiffer>
    <experiments>3</experiments>
</comment>
<comment type="interaction">
    <interactant intactId="EBI-741101">
        <id>Q13643</id>
    </interactant>
    <interactant intactId="EBI-1049952">
        <id>Q96KM6</id>
        <label>ZNF512B</label>
    </interactant>
    <organismsDiffer>false</organismsDiffer>
    <experiments>10</experiments>
</comment>
<comment type="interaction">
    <interactant intactId="EBI-741101">
        <id>Q13643</id>
    </interactant>
    <interactant intactId="EBI-6427977">
        <id>Q96SQ5</id>
        <label>ZNF587</label>
    </interactant>
    <organismsDiffer>false</organismsDiffer>
    <experiments>3</experiments>
</comment>
<comment type="subcellular location">
    <subcellularLocation>
        <location evidence="1">Nucleus</location>
    </subcellularLocation>
    <subcellularLocation>
        <location evidence="1">Cytoplasm</location>
    </subcellularLocation>
</comment>
<comment type="tissue specificity">
    <text>Expressed only in skeletal muscle.</text>
</comment>
<proteinExistence type="evidence at protein level"/>
<keyword id="KW-0002">3D-structure</keyword>
<keyword id="KW-0007">Acetylation</keyword>
<keyword id="KW-0010">Activator</keyword>
<keyword id="KW-0963">Cytoplasm</keyword>
<keyword id="KW-0440">LIM domain</keyword>
<keyword id="KW-0479">Metal-binding</keyword>
<keyword id="KW-0539">Nucleus</keyword>
<keyword id="KW-1267">Proteomics identification</keyword>
<keyword id="KW-1185">Reference proteome</keyword>
<keyword id="KW-0677">Repeat</keyword>
<keyword id="KW-0804">Transcription</keyword>
<keyword id="KW-0805">Transcription regulation</keyword>
<keyword id="KW-0862">Zinc</keyword>
<keyword id="KW-0863">Zinc-finger</keyword>
<feature type="initiator methionine" description="Removed" evidence="5">
    <location>
        <position position="1"/>
    </location>
</feature>
<feature type="chain" id="PRO_0000075740" description="Four and a half LIM domains protein 3">
    <location>
        <begin position="2"/>
        <end position="280"/>
    </location>
</feature>
<feature type="domain" description="LIM zinc-binding 1" evidence="3">
    <location>
        <begin position="40"/>
        <end position="92"/>
    </location>
</feature>
<feature type="domain" description="LIM zinc-binding 2" evidence="3">
    <location>
        <begin position="101"/>
        <end position="153"/>
    </location>
</feature>
<feature type="domain" description="LIM zinc-binding 3" evidence="3">
    <location>
        <begin position="162"/>
        <end position="212"/>
    </location>
</feature>
<feature type="domain" description="LIM zinc-binding 4" evidence="3">
    <location>
        <begin position="221"/>
        <end position="275"/>
    </location>
</feature>
<feature type="zinc finger region" description="C4-type" evidence="2">
    <location>
        <begin position="7"/>
        <end position="31"/>
    </location>
</feature>
<feature type="modified residue" description="N-acetylserine" evidence="5">
    <location>
        <position position="2"/>
    </location>
</feature>
<feature type="modified residue" description="N6-acetyllysine" evidence="1">
    <location>
        <position position="157"/>
    </location>
</feature>
<feature type="modified residue" description="N6-acetyllysine" evidence="1">
    <location>
        <position position="235"/>
    </location>
</feature>
<feature type="sequence conflict" description="In Ref. 1; AAC04466." evidence="4" ref="1">
    <original>C</original>
    <variation>R</variation>
    <location>
        <position position="82"/>
    </location>
</feature>
<feature type="sequence conflict" description="In Ref. 1; AAC04466." evidence="4" ref="1">
    <original>S</original>
    <variation>I</variation>
    <location>
        <position position="130"/>
    </location>
</feature>
<feature type="sequence conflict" description="In Ref. 1; AAC04466." evidence="4" ref="1">
    <original>S</original>
    <variation>P</variation>
    <location>
        <position position="140"/>
    </location>
</feature>
<feature type="sequence conflict" description="In Ref. 1; AAC04466." evidence="4" ref="1">
    <original>K</original>
    <variation>N</variation>
    <location>
        <position position="157"/>
    </location>
</feature>
<feature type="sequence conflict" description="In Ref. 1; AAC04466." evidence="4" ref="1">
    <original>S</original>
    <variation>T</variation>
    <location>
        <position position="166"/>
    </location>
</feature>
<feature type="sequence conflict" description="In Ref. 1; AAC04466." evidence="4" ref="1">
    <original>V</original>
    <variation>L</variation>
    <location>
        <position position="174"/>
    </location>
</feature>
<feature type="sequence conflict" description="In Ref. 1; AAC04466." evidence="4" ref="1">
    <original>Q</original>
    <variation>L</variation>
    <location>
        <position position="179"/>
    </location>
</feature>
<feature type="sequence conflict" description="In Ref. 1; AAC04466." evidence="4" ref="1">
    <original>RE</original>
    <variation>PK</variation>
    <location>
        <begin position="183"/>
        <end position="184"/>
    </location>
</feature>
<feature type="sequence conflict" description="In Ref. 1; AAC04466." evidence="4" ref="1">
    <original>SCA</original>
    <variation>TCD</variation>
    <location>
        <begin position="250"/>
        <end position="252"/>
    </location>
</feature>
<feature type="sequence conflict" description="In Ref. 4; CAG33706." evidence="4" ref="4">
    <original>A</original>
    <variation>D</variation>
    <location>
        <position position="252"/>
    </location>
</feature>
<feature type="sequence conflict" description="In Ref. 1; AAC04466." evidence="4" ref="1">
    <original>T</original>
    <variation>N</variation>
    <location>
        <position position="256"/>
    </location>
</feature>
<feature type="turn" evidence="8">
    <location>
        <begin position="41"/>
        <end position="43"/>
    </location>
</feature>
<feature type="turn" evidence="8">
    <location>
        <begin position="63"/>
        <end position="65"/>
    </location>
</feature>
<feature type="turn" evidence="8">
    <location>
        <begin position="69"/>
        <end position="71"/>
    </location>
</feature>
<feature type="strand" evidence="8">
    <location>
        <begin position="80"/>
        <end position="83"/>
    </location>
</feature>
<feature type="strand" evidence="8">
    <location>
        <begin position="86"/>
        <end position="89"/>
    </location>
</feature>
<feature type="turn" evidence="8">
    <location>
        <begin position="90"/>
        <end position="92"/>
    </location>
</feature>
<feature type="strand" evidence="6">
    <location>
        <begin position="102"/>
        <end position="104"/>
    </location>
</feature>
<feature type="strand" evidence="6">
    <location>
        <begin position="110"/>
        <end position="112"/>
    </location>
</feature>
<feature type="turn" evidence="6">
    <location>
        <begin position="124"/>
        <end position="126"/>
    </location>
</feature>
<feature type="turn" evidence="6">
    <location>
        <begin position="130"/>
        <end position="132"/>
    </location>
</feature>
<feature type="turn" evidence="6">
    <location>
        <begin position="136"/>
        <end position="138"/>
    </location>
</feature>
<feature type="strand" evidence="6">
    <location>
        <begin position="141"/>
        <end position="144"/>
    </location>
</feature>
<feature type="strand" evidence="6">
    <location>
        <begin position="147"/>
        <end position="150"/>
    </location>
</feature>
<feature type="helix" evidence="6">
    <location>
        <begin position="151"/>
        <end position="157"/>
    </location>
</feature>
<feature type="turn" evidence="7">
    <location>
        <begin position="163"/>
        <end position="165"/>
    </location>
</feature>
<feature type="strand" evidence="7">
    <location>
        <begin position="174"/>
        <end position="181"/>
    </location>
</feature>
<feature type="turn" evidence="7">
    <location>
        <begin position="183"/>
        <end position="185"/>
    </location>
</feature>
<feature type="strand" evidence="7">
    <location>
        <begin position="189"/>
        <end position="191"/>
    </location>
</feature>
<feature type="strand" evidence="7">
    <location>
        <begin position="200"/>
        <end position="202"/>
    </location>
</feature>
<feature type="strand" evidence="7">
    <location>
        <begin position="204"/>
        <end position="209"/>
    </location>
</feature>
<feature type="helix" evidence="7">
    <location>
        <begin position="210"/>
        <end position="216"/>
    </location>
</feature>
<reference key="1">
    <citation type="journal article" date="1999" name="Biochem. Biophys. Res. Commun.">
        <title>The LIM proteins FHL1 and FHL3 are expressed differently in skeletal muscle.</title>
        <authorList>
            <person name="Morgan M.J."/>
            <person name="Madgwick A.J.A."/>
        </authorList>
    </citation>
    <scope>NUCLEOTIDE SEQUENCE [MRNA]</scope>
    <source>
        <tissue>Skeletal muscle</tissue>
    </source>
</reference>
<reference key="2">
    <citation type="journal article" date="2004" name="Nat. Genet.">
        <title>Complete sequencing and characterization of 21,243 full-length human cDNAs.</title>
        <authorList>
            <person name="Ota T."/>
            <person name="Suzuki Y."/>
            <person name="Nishikawa T."/>
            <person name="Otsuki T."/>
            <person name="Sugiyama T."/>
            <person name="Irie R."/>
            <person name="Wakamatsu A."/>
            <person name="Hayashi K."/>
            <person name="Sato H."/>
            <person name="Nagai K."/>
            <person name="Kimura K."/>
            <person name="Makita H."/>
            <person name="Sekine M."/>
            <person name="Obayashi M."/>
            <person name="Nishi T."/>
            <person name="Shibahara T."/>
            <person name="Tanaka T."/>
            <person name="Ishii S."/>
            <person name="Yamamoto J."/>
            <person name="Saito K."/>
            <person name="Kawai Y."/>
            <person name="Isono Y."/>
            <person name="Nakamura Y."/>
            <person name="Nagahari K."/>
            <person name="Murakami K."/>
            <person name="Yasuda T."/>
            <person name="Iwayanagi T."/>
            <person name="Wagatsuma M."/>
            <person name="Shiratori A."/>
            <person name="Sudo H."/>
            <person name="Hosoiri T."/>
            <person name="Kaku Y."/>
            <person name="Kodaira H."/>
            <person name="Kondo H."/>
            <person name="Sugawara M."/>
            <person name="Takahashi M."/>
            <person name="Kanda K."/>
            <person name="Yokoi T."/>
            <person name="Furuya T."/>
            <person name="Kikkawa E."/>
            <person name="Omura Y."/>
            <person name="Abe K."/>
            <person name="Kamihara K."/>
            <person name="Katsuta N."/>
            <person name="Sato K."/>
            <person name="Tanikawa M."/>
            <person name="Yamazaki M."/>
            <person name="Ninomiya K."/>
            <person name="Ishibashi T."/>
            <person name="Yamashita H."/>
            <person name="Murakawa K."/>
            <person name="Fujimori K."/>
            <person name="Tanai H."/>
            <person name="Kimata M."/>
            <person name="Watanabe M."/>
            <person name="Hiraoka S."/>
            <person name="Chiba Y."/>
            <person name="Ishida S."/>
            <person name="Ono Y."/>
            <person name="Takiguchi S."/>
            <person name="Watanabe S."/>
            <person name="Yosida M."/>
            <person name="Hotuta T."/>
            <person name="Kusano J."/>
            <person name="Kanehori K."/>
            <person name="Takahashi-Fujii A."/>
            <person name="Hara H."/>
            <person name="Tanase T.-O."/>
            <person name="Nomura Y."/>
            <person name="Togiya S."/>
            <person name="Komai F."/>
            <person name="Hara R."/>
            <person name="Takeuchi K."/>
            <person name="Arita M."/>
            <person name="Imose N."/>
            <person name="Musashino K."/>
            <person name="Yuuki H."/>
            <person name="Oshima A."/>
            <person name="Sasaki N."/>
            <person name="Aotsuka S."/>
            <person name="Yoshikawa Y."/>
            <person name="Matsunawa H."/>
            <person name="Ichihara T."/>
            <person name="Shiohata N."/>
            <person name="Sano S."/>
            <person name="Moriya S."/>
            <person name="Momiyama H."/>
            <person name="Satoh N."/>
            <person name="Takami S."/>
            <person name="Terashima Y."/>
            <person name="Suzuki O."/>
            <person name="Nakagawa S."/>
            <person name="Senoh A."/>
            <person name="Mizoguchi H."/>
            <person name="Goto Y."/>
            <person name="Shimizu F."/>
            <person name="Wakebe H."/>
            <person name="Hishigaki H."/>
            <person name="Watanabe T."/>
            <person name="Sugiyama A."/>
            <person name="Takemoto M."/>
            <person name="Kawakami B."/>
            <person name="Yamazaki M."/>
            <person name="Watanabe K."/>
            <person name="Kumagai A."/>
            <person name="Itakura S."/>
            <person name="Fukuzumi Y."/>
            <person name="Fujimori Y."/>
            <person name="Komiyama M."/>
            <person name="Tashiro H."/>
            <person name="Tanigami A."/>
            <person name="Fujiwara T."/>
            <person name="Ono T."/>
            <person name="Yamada K."/>
            <person name="Fujii Y."/>
            <person name="Ozaki K."/>
            <person name="Hirao M."/>
            <person name="Ohmori Y."/>
            <person name="Kawabata A."/>
            <person name="Hikiji T."/>
            <person name="Kobatake N."/>
            <person name="Inagaki H."/>
            <person name="Ikema Y."/>
            <person name="Okamoto S."/>
            <person name="Okitani R."/>
            <person name="Kawakami T."/>
            <person name="Noguchi S."/>
            <person name="Itoh T."/>
            <person name="Shigeta K."/>
            <person name="Senba T."/>
            <person name="Matsumura K."/>
            <person name="Nakajima Y."/>
            <person name="Mizuno T."/>
            <person name="Morinaga M."/>
            <person name="Sasaki M."/>
            <person name="Togashi T."/>
            <person name="Oyama M."/>
            <person name="Hata H."/>
            <person name="Watanabe M."/>
            <person name="Komatsu T."/>
            <person name="Mizushima-Sugano J."/>
            <person name="Satoh T."/>
            <person name="Shirai Y."/>
            <person name="Takahashi Y."/>
            <person name="Nakagawa K."/>
            <person name="Okumura K."/>
            <person name="Nagase T."/>
            <person name="Nomura N."/>
            <person name="Kikuchi H."/>
            <person name="Masuho Y."/>
            <person name="Yamashita R."/>
            <person name="Nakai K."/>
            <person name="Yada T."/>
            <person name="Nakamura Y."/>
            <person name="Ohara O."/>
            <person name="Isogai T."/>
            <person name="Sugano S."/>
        </authorList>
    </citation>
    <scope>NUCLEOTIDE SEQUENCE [LARGE SCALE MRNA]</scope>
    <source>
        <tissue>Embryo</tissue>
    </source>
</reference>
<reference key="3">
    <citation type="submission" date="2003-05" db="EMBL/GenBank/DDBJ databases">
        <title>Cloning of human full-length CDSs in BD Creator(TM) system donor vector.</title>
        <authorList>
            <person name="Kalnine N."/>
            <person name="Chen X."/>
            <person name="Rolfs A."/>
            <person name="Halleck A."/>
            <person name="Hines L."/>
            <person name="Eisenstein S."/>
            <person name="Koundinya M."/>
            <person name="Raphael J."/>
            <person name="Moreira D."/>
            <person name="Kelley T."/>
            <person name="LaBaer J."/>
            <person name="Lin Y."/>
            <person name="Phelan M."/>
            <person name="Farmer A."/>
        </authorList>
    </citation>
    <scope>NUCLEOTIDE SEQUENCE [LARGE SCALE MRNA]</scope>
</reference>
<reference key="4">
    <citation type="submission" date="2004-06" db="EMBL/GenBank/DDBJ databases">
        <title>Cloning of human full open reading frames in Gateway(TM) system entry vector (pDONR201).</title>
        <authorList>
            <person name="Ebert L."/>
            <person name="Schick M."/>
            <person name="Neubert P."/>
            <person name="Schatten R."/>
            <person name="Henze S."/>
            <person name="Korn B."/>
        </authorList>
    </citation>
    <scope>NUCLEOTIDE SEQUENCE [LARGE SCALE MRNA]</scope>
</reference>
<reference key="5">
    <citation type="journal article" date="2006" name="Nature">
        <title>The DNA sequence and biological annotation of human chromosome 1.</title>
        <authorList>
            <person name="Gregory S.G."/>
            <person name="Barlow K.F."/>
            <person name="McLay K.E."/>
            <person name="Kaul R."/>
            <person name="Swarbreck D."/>
            <person name="Dunham A."/>
            <person name="Scott C.E."/>
            <person name="Howe K.L."/>
            <person name="Woodfine K."/>
            <person name="Spencer C.C.A."/>
            <person name="Jones M.C."/>
            <person name="Gillson C."/>
            <person name="Searle S."/>
            <person name="Zhou Y."/>
            <person name="Kokocinski F."/>
            <person name="McDonald L."/>
            <person name="Evans R."/>
            <person name="Phillips K."/>
            <person name="Atkinson A."/>
            <person name="Cooper R."/>
            <person name="Jones C."/>
            <person name="Hall R.E."/>
            <person name="Andrews T.D."/>
            <person name="Lloyd C."/>
            <person name="Ainscough R."/>
            <person name="Almeida J.P."/>
            <person name="Ambrose K.D."/>
            <person name="Anderson F."/>
            <person name="Andrew R.W."/>
            <person name="Ashwell R.I.S."/>
            <person name="Aubin K."/>
            <person name="Babbage A.K."/>
            <person name="Bagguley C.L."/>
            <person name="Bailey J."/>
            <person name="Beasley H."/>
            <person name="Bethel G."/>
            <person name="Bird C.P."/>
            <person name="Bray-Allen S."/>
            <person name="Brown J.Y."/>
            <person name="Brown A.J."/>
            <person name="Buckley D."/>
            <person name="Burton J."/>
            <person name="Bye J."/>
            <person name="Carder C."/>
            <person name="Chapman J.C."/>
            <person name="Clark S.Y."/>
            <person name="Clarke G."/>
            <person name="Clee C."/>
            <person name="Cobley V."/>
            <person name="Collier R.E."/>
            <person name="Corby N."/>
            <person name="Coville G.J."/>
            <person name="Davies J."/>
            <person name="Deadman R."/>
            <person name="Dunn M."/>
            <person name="Earthrowl M."/>
            <person name="Ellington A.G."/>
            <person name="Errington H."/>
            <person name="Frankish A."/>
            <person name="Frankland J."/>
            <person name="French L."/>
            <person name="Garner P."/>
            <person name="Garnett J."/>
            <person name="Gay L."/>
            <person name="Ghori M.R.J."/>
            <person name="Gibson R."/>
            <person name="Gilby L.M."/>
            <person name="Gillett W."/>
            <person name="Glithero R.J."/>
            <person name="Grafham D.V."/>
            <person name="Griffiths C."/>
            <person name="Griffiths-Jones S."/>
            <person name="Grocock R."/>
            <person name="Hammond S."/>
            <person name="Harrison E.S.I."/>
            <person name="Hart E."/>
            <person name="Haugen E."/>
            <person name="Heath P.D."/>
            <person name="Holmes S."/>
            <person name="Holt K."/>
            <person name="Howden P.J."/>
            <person name="Hunt A.R."/>
            <person name="Hunt S.E."/>
            <person name="Hunter G."/>
            <person name="Isherwood J."/>
            <person name="James R."/>
            <person name="Johnson C."/>
            <person name="Johnson D."/>
            <person name="Joy A."/>
            <person name="Kay M."/>
            <person name="Kershaw J.K."/>
            <person name="Kibukawa M."/>
            <person name="Kimberley A.M."/>
            <person name="King A."/>
            <person name="Knights A.J."/>
            <person name="Lad H."/>
            <person name="Laird G."/>
            <person name="Lawlor S."/>
            <person name="Leongamornlert D.A."/>
            <person name="Lloyd D.M."/>
            <person name="Loveland J."/>
            <person name="Lovell J."/>
            <person name="Lush M.J."/>
            <person name="Lyne R."/>
            <person name="Martin S."/>
            <person name="Mashreghi-Mohammadi M."/>
            <person name="Matthews L."/>
            <person name="Matthews N.S.W."/>
            <person name="McLaren S."/>
            <person name="Milne S."/>
            <person name="Mistry S."/>
            <person name="Moore M.J.F."/>
            <person name="Nickerson T."/>
            <person name="O'Dell C.N."/>
            <person name="Oliver K."/>
            <person name="Palmeiri A."/>
            <person name="Palmer S.A."/>
            <person name="Parker A."/>
            <person name="Patel D."/>
            <person name="Pearce A.V."/>
            <person name="Peck A.I."/>
            <person name="Pelan S."/>
            <person name="Phelps K."/>
            <person name="Phillimore B.J."/>
            <person name="Plumb R."/>
            <person name="Rajan J."/>
            <person name="Raymond C."/>
            <person name="Rouse G."/>
            <person name="Saenphimmachak C."/>
            <person name="Sehra H.K."/>
            <person name="Sheridan E."/>
            <person name="Shownkeen R."/>
            <person name="Sims S."/>
            <person name="Skuce C.D."/>
            <person name="Smith M."/>
            <person name="Steward C."/>
            <person name="Subramanian S."/>
            <person name="Sycamore N."/>
            <person name="Tracey A."/>
            <person name="Tromans A."/>
            <person name="Van Helmond Z."/>
            <person name="Wall M."/>
            <person name="Wallis J.M."/>
            <person name="White S."/>
            <person name="Whitehead S.L."/>
            <person name="Wilkinson J.E."/>
            <person name="Willey D.L."/>
            <person name="Williams H."/>
            <person name="Wilming L."/>
            <person name="Wray P.W."/>
            <person name="Wu Z."/>
            <person name="Coulson A."/>
            <person name="Vaudin M."/>
            <person name="Sulston J.E."/>
            <person name="Durbin R.M."/>
            <person name="Hubbard T."/>
            <person name="Wooster R."/>
            <person name="Dunham I."/>
            <person name="Carter N.P."/>
            <person name="McVean G."/>
            <person name="Ross M.T."/>
            <person name="Harrow J."/>
            <person name="Olson M.V."/>
            <person name="Beck S."/>
            <person name="Rogers J."/>
            <person name="Bentley D.R."/>
        </authorList>
    </citation>
    <scope>NUCLEOTIDE SEQUENCE [LARGE SCALE GENOMIC DNA]</scope>
</reference>
<reference key="6">
    <citation type="submission" date="2005-09" db="EMBL/GenBank/DDBJ databases">
        <authorList>
            <person name="Mural R.J."/>
            <person name="Istrail S."/>
            <person name="Sutton G.G."/>
            <person name="Florea L."/>
            <person name="Halpern A.L."/>
            <person name="Mobarry C.M."/>
            <person name="Lippert R."/>
            <person name="Walenz B."/>
            <person name="Shatkay H."/>
            <person name="Dew I."/>
            <person name="Miller J.R."/>
            <person name="Flanigan M.J."/>
            <person name="Edwards N.J."/>
            <person name="Bolanos R."/>
            <person name="Fasulo D."/>
            <person name="Halldorsson B.V."/>
            <person name="Hannenhalli S."/>
            <person name="Turner R."/>
            <person name="Yooseph S."/>
            <person name="Lu F."/>
            <person name="Nusskern D.R."/>
            <person name="Shue B.C."/>
            <person name="Zheng X.H."/>
            <person name="Zhong F."/>
            <person name="Delcher A.L."/>
            <person name="Huson D.H."/>
            <person name="Kravitz S.A."/>
            <person name="Mouchard L."/>
            <person name="Reinert K."/>
            <person name="Remington K.A."/>
            <person name="Clark A.G."/>
            <person name="Waterman M.S."/>
            <person name="Eichler E.E."/>
            <person name="Adams M.D."/>
            <person name="Hunkapiller M.W."/>
            <person name="Myers E.W."/>
            <person name="Venter J.C."/>
        </authorList>
    </citation>
    <scope>NUCLEOTIDE SEQUENCE [LARGE SCALE GENOMIC DNA]</scope>
</reference>
<reference key="7">
    <citation type="journal article" date="2004" name="Genome Res.">
        <title>The status, quality, and expansion of the NIH full-length cDNA project: the Mammalian Gene Collection (MGC).</title>
        <authorList>
            <consortium name="The MGC Project Team"/>
        </authorList>
    </citation>
    <scope>NUCLEOTIDE SEQUENCE [LARGE SCALE MRNA]</scope>
    <source>
        <tissue>Muscle</tissue>
    </source>
</reference>
<reference key="8">
    <citation type="journal article" date="1996" name="Biochem. Biophys. Res. Commun.">
        <title>Slim defines a novel family of LIM-proteins expressed in skeletal muscle.</title>
        <authorList>
            <person name="Morgan M.J."/>
            <person name="Madgwick A.J.A."/>
        </authorList>
    </citation>
    <scope>PRELIMINARY NUCLEOTIDE SEQUENCE [MRNA] OF 16-280</scope>
    <source>
        <tissue>Skeletal muscle</tissue>
    </source>
</reference>
<reference key="9">
    <citation type="journal article" date="2011" name="BMC Syst. Biol.">
        <title>Initial characterization of the human central proteome.</title>
        <authorList>
            <person name="Burkard T.R."/>
            <person name="Planyavsky M."/>
            <person name="Kaupe I."/>
            <person name="Breitwieser F.P."/>
            <person name="Buerckstuemmer T."/>
            <person name="Bennett K.L."/>
            <person name="Superti-Furga G."/>
            <person name="Colinge J."/>
        </authorList>
    </citation>
    <scope>IDENTIFICATION BY MASS SPECTROMETRY [LARGE SCALE ANALYSIS]</scope>
</reference>
<reference key="10">
    <citation type="journal article" date="2012" name="Proc. Natl. Acad. Sci. U.S.A.">
        <title>N-terminal acetylome analyses and functional insights of the N-terminal acetyltransferase NatB.</title>
        <authorList>
            <person name="Van Damme P."/>
            <person name="Lasa M."/>
            <person name="Polevoda B."/>
            <person name="Gazquez C."/>
            <person name="Elosegui-Artola A."/>
            <person name="Kim D.S."/>
            <person name="De Juan-Pardo E."/>
            <person name="Demeyer K."/>
            <person name="Hole K."/>
            <person name="Larrea E."/>
            <person name="Timmerman E."/>
            <person name="Prieto J."/>
            <person name="Arnesen T."/>
            <person name="Sherman F."/>
            <person name="Gevaert K."/>
            <person name="Aldabe R."/>
        </authorList>
    </citation>
    <scope>ACETYLATION [LARGE SCALE ANALYSIS] AT SER-2</scope>
    <scope>CLEAVAGE OF INITIATOR METHIONINE [LARGE SCALE ANALYSIS]</scope>
    <scope>IDENTIFICATION BY MASS SPECTROMETRY [LARGE SCALE ANALYSIS]</scope>
</reference>
<reference key="11">
    <citation type="journal article" date="2014" name="J. Proteomics">
        <title>An enzyme assisted RP-RPLC approach for in-depth analysis of human liver phosphoproteome.</title>
        <authorList>
            <person name="Bian Y."/>
            <person name="Song C."/>
            <person name="Cheng K."/>
            <person name="Dong M."/>
            <person name="Wang F."/>
            <person name="Huang J."/>
            <person name="Sun D."/>
            <person name="Wang L."/>
            <person name="Ye M."/>
            <person name="Zou H."/>
        </authorList>
    </citation>
    <scope>IDENTIFICATION BY MASS SPECTROMETRY [LARGE SCALE ANALYSIS]</scope>
    <source>
        <tissue>Liver</tissue>
    </source>
</reference>
<reference key="12">
    <citation type="submission" date="2005-08" db="PDB data bank">
        <title>Solution structure of LIM domains from human skeletal muscle LIM-protein 2.</title>
        <authorList>
            <consortium name="RIKEN structural genomics initiative (RSGI)"/>
        </authorList>
    </citation>
    <scope>STRUCTURE BY NMR OF 98-218 IN COMPLEX WITH ZINC IONS</scope>
</reference>